<sequence>MPGNSRRRGAVRKSGTKKGAGVGSGGQRRRGLEGRGPTPPAHLRPHHPAAKRARAQPRRPVKRADETETVLGRNPVLECLRAGVPATALYVALGTEADERLTECVARAADSGIAIVELLRADLDRMTANHLHQGIALQVPPYNYAHPDDLLAAALDQPPALLVALDNLSDPRNLGAIVRSVAAFGGHGVLIPQRRSASVTAVAWRTSAGAAARIPVARATNLTRTLKGWADRGVRVIGLDAGGGTALDDVDGTDSLVVVVGSEGKGLSRLVRQNCDEVVSIPMAAQAESLNASVAAGVVLAEIARQRRRPREPREQTQNRMI</sequence>
<gene>
    <name type="ordered locus">MRA_3618</name>
</gene>
<organism>
    <name type="scientific">Mycobacterium tuberculosis (strain ATCC 25177 / H37Ra)</name>
    <dbReference type="NCBI Taxonomy" id="419947"/>
    <lineage>
        <taxon>Bacteria</taxon>
        <taxon>Bacillati</taxon>
        <taxon>Actinomycetota</taxon>
        <taxon>Actinomycetes</taxon>
        <taxon>Mycobacteriales</taxon>
        <taxon>Mycobacteriaceae</taxon>
        <taxon>Mycobacterium</taxon>
        <taxon>Mycobacterium tuberculosis complex</taxon>
    </lineage>
</organism>
<protein>
    <recommendedName>
        <fullName>Uncharacterized tRNA/rRNA methyltransferase MRA_3618</fullName>
        <ecNumber>2.1.1.-</ecNumber>
    </recommendedName>
</protein>
<accession>A5U8Q4</accession>
<name>Y3618_MYCTA</name>
<keyword id="KW-0489">Methyltransferase</keyword>
<keyword id="KW-1185">Reference proteome</keyword>
<keyword id="KW-0949">S-adenosyl-L-methionine</keyword>
<keyword id="KW-0808">Transferase</keyword>
<reference key="1">
    <citation type="journal article" date="2008" name="PLoS ONE">
        <title>Genetic basis of virulence attenuation revealed by comparative genomic analysis of Mycobacterium tuberculosis strain H37Ra versus H37Rv.</title>
        <authorList>
            <person name="Zheng H."/>
            <person name="Lu L."/>
            <person name="Wang B."/>
            <person name="Pu S."/>
            <person name="Zhang X."/>
            <person name="Zhu G."/>
            <person name="Shi W."/>
            <person name="Zhang L."/>
            <person name="Wang H."/>
            <person name="Wang S."/>
            <person name="Zhao G."/>
            <person name="Zhang Y."/>
        </authorList>
    </citation>
    <scope>NUCLEOTIDE SEQUENCE [LARGE SCALE GENOMIC DNA]</scope>
    <source>
        <strain>ATCC 25177 / H37Ra</strain>
    </source>
</reference>
<feature type="chain" id="PRO_0000379582" description="Uncharacterized tRNA/rRNA methyltransferase MRA_3618">
    <location>
        <begin position="1"/>
        <end position="322"/>
    </location>
</feature>
<feature type="region of interest" description="Disordered" evidence="2">
    <location>
        <begin position="1"/>
        <end position="69"/>
    </location>
</feature>
<feature type="compositionally biased region" description="Basic residues" evidence="2">
    <location>
        <begin position="1"/>
        <end position="16"/>
    </location>
</feature>
<feature type="compositionally biased region" description="Basic residues" evidence="2">
    <location>
        <begin position="43"/>
        <end position="61"/>
    </location>
</feature>
<feature type="binding site" evidence="1">
    <location>
        <position position="261"/>
    </location>
    <ligand>
        <name>S-adenosyl-L-methionine</name>
        <dbReference type="ChEBI" id="CHEBI:59789"/>
    </ligand>
</feature>
<feature type="binding site" evidence="1">
    <location>
        <position position="281"/>
    </location>
    <ligand>
        <name>S-adenosyl-L-methionine</name>
        <dbReference type="ChEBI" id="CHEBI:59789"/>
    </ligand>
</feature>
<feature type="binding site" evidence="1">
    <location>
        <position position="290"/>
    </location>
    <ligand>
        <name>S-adenosyl-L-methionine</name>
        <dbReference type="ChEBI" id="CHEBI:59789"/>
    </ligand>
</feature>
<dbReference type="EC" id="2.1.1.-"/>
<dbReference type="EMBL" id="CP000611">
    <property type="protein sequence ID" value="ABQ75404.1"/>
    <property type="molecule type" value="Genomic_DNA"/>
</dbReference>
<dbReference type="SMR" id="A5U8Q4"/>
<dbReference type="KEGG" id="mra:MRA_3618"/>
<dbReference type="eggNOG" id="COG0566">
    <property type="taxonomic scope" value="Bacteria"/>
</dbReference>
<dbReference type="HOGENOM" id="CLU_021322_0_0_11"/>
<dbReference type="Proteomes" id="UP000001988">
    <property type="component" value="Chromosome"/>
</dbReference>
<dbReference type="GO" id="GO:0005829">
    <property type="term" value="C:cytosol"/>
    <property type="evidence" value="ECO:0007669"/>
    <property type="project" value="TreeGrafter"/>
</dbReference>
<dbReference type="GO" id="GO:0003723">
    <property type="term" value="F:RNA binding"/>
    <property type="evidence" value="ECO:0007669"/>
    <property type="project" value="InterPro"/>
</dbReference>
<dbReference type="GO" id="GO:0008173">
    <property type="term" value="F:RNA methyltransferase activity"/>
    <property type="evidence" value="ECO:0007669"/>
    <property type="project" value="InterPro"/>
</dbReference>
<dbReference type="GO" id="GO:0032259">
    <property type="term" value="P:methylation"/>
    <property type="evidence" value="ECO:0007669"/>
    <property type="project" value="UniProtKB-KW"/>
</dbReference>
<dbReference type="GO" id="GO:0006396">
    <property type="term" value="P:RNA processing"/>
    <property type="evidence" value="ECO:0007669"/>
    <property type="project" value="InterPro"/>
</dbReference>
<dbReference type="CDD" id="cd18103">
    <property type="entry name" value="SpoU-like_RlmB"/>
    <property type="match status" value="1"/>
</dbReference>
<dbReference type="FunFam" id="3.30.1330.30:FF:000024">
    <property type="entry name" value="Putative tRNA/rRNA methyltransferase"/>
    <property type="match status" value="1"/>
</dbReference>
<dbReference type="FunFam" id="3.40.1280.10:FF:000015">
    <property type="entry name" value="Putative tRNA/rRNA methyltransferase"/>
    <property type="match status" value="1"/>
</dbReference>
<dbReference type="Gene3D" id="3.30.1330.30">
    <property type="match status" value="1"/>
</dbReference>
<dbReference type="Gene3D" id="3.40.1280.10">
    <property type="match status" value="1"/>
</dbReference>
<dbReference type="InterPro" id="IPR029028">
    <property type="entry name" value="Alpha/beta_knot_MTases"/>
</dbReference>
<dbReference type="InterPro" id="IPR029064">
    <property type="entry name" value="Ribosomal_eL30-like_sf"/>
</dbReference>
<dbReference type="InterPro" id="IPR004441">
    <property type="entry name" value="rRNA_MeTrfase_TrmH"/>
</dbReference>
<dbReference type="InterPro" id="IPR001537">
    <property type="entry name" value="SpoU_MeTrfase"/>
</dbReference>
<dbReference type="InterPro" id="IPR013123">
    <property type="entry name" value="SpoU_subst-bd"/>
</dbReference>
<dbReference type="InterPro" id="IPR029026">
    <property type="entry name" value="tRNA_m1G_MTases_N"/>
</dbReference>
<dbReference type="NCBIfam" id="TIGR00186">
    <property type="entry name" value="rRNA_methyl_3"/>
    <property type="match status" value="1"/>
</dbReference>
<dbReference type="PANTHER" id="PTHR46429">
    <property type="entry name" value="23S RRNA (GUANOSINE-2'-O-)-METHYLTRANSFERASE RLMB"/>
    <property type="match status" value="1"/>
</dbReference>
<dbReference type="PANTHER" id="PTHR46429:SF1">
    <property type="entry name" value="23S RRNA (GUANOSINE-2'-O-)-METHYLTRANSFERASE RLMB"/>
    <property type="match status" value="1"/>
</dbReference>
<dbReference type="Pfam" id="PF00588">
    <property type="entry name" value="SpoU_methylase"/>
    <property type="match status" value="1"/>
</dbReference>
<dbReference type="Pfam" id="PF08032">
    <property type="entry name" value="SpoU_sub_bind"/>
    <property type="match status" value="1"/>
</dbReference>
<dbReference type="SMART" id="SM00967">
    <property type="entry name" value="SpoU_sub_bind"/>
    <property type="match status" value="1"/>
</dbReference>
<dbReference type="SUPFAM" id="SSF75217">
    <property type="entry name" value="alpha/beta knot"/>
    <property type="match status" value="1"/>
</dbReference>
<dbReference type="SUPFAM" id="SSF55315">
    <property type="entry name" value="L30e-like"/>
    <property type="match status" value="1"/>
</dbReference>
<proteinExistence type="inferred from homology"/>
<evidence type="ECO:0000250" key="1"/>
<evidence type="ECO:0000256" key="2">
    <source>
        <dbReference type="SAM" id="MobiDB-lite"/>
    </source>
</evidence>
<evidence type="ECO:0000305" key="3"/>
<comment type="similarity">
    <text evidence="3">Belongs to the class IV-like SAM-binding methyltransferase superfamily. RNA methyltransferase TrmH family.</text>
</comment>